<name>FDHD_COREF</name>
<evidence type="ECO:0000255" key="1">
    <source>
        <dbReference type="HAMAP-Rule" id="MF_00187"/>
    </source>
</evidence>
<keyword id="KW-0963">Cytoplasm</keyword>
<keyword id="KW-0501">Molybdenum cofactor biosynthesis</keyword>
<keyword id="KW-1185">Reference proteome</keyword>
<proteinExistence type="inferred from homology"/>
<dbReference type="EMBL" id="BA000035">
    <property type="protein sequence ID" value="BAC17348.1"/>
    <property type="molecule type" value="Genomic_DNA"/>
</dbReference>
<dbReference type="RefSeq" id="WP_006769789.1">
    <property type="nucleotide sequence ID" value="NC_004369.1"/>
</dbReference>
<dbReference type="SMR" id="Q8FS66"/>
<dbReference type="STRING" id="196164.gene:10740940"/>
<dbReference type="KEGG" id="cef:CE0538"/>
<dbReference type="eggNOG" id="COG1526">
    <property type="taxonomic scope" value="Bacteria"/>
</dbReference>
<dbReference type="HOGENOM" id="CLU_056887_3_0_11"/>
<dbReference type="OrthoDB" id="3197277at2"/>
<dbReference type="Proteomes" id="UP000001409">
    <property type="component" value="Chromosome"/>
</dbReference>
<dbReference type="GO" id="GO:0005737">
    <property type="term" value="C:cytoplasm"/>
    <property type="evidence" value="ECO:0007669"/>
    <property type="project" value="UniProtKB-SubCell"/>
</dbReference>
<dbReference type="GO" id="GO:0097163">
    <property type="term" value="F:sulfur carrier activity"/>
    <property type="evidence" value="ECO:0007669"/>
    <property type="project" value="UniProtKB-UniRule"/>
</dbReference>
<dbReference type="GO" id="GO:0016783">
    <property type="term" value="F:sulfurtransferase activity"/>
    <property type="evidence" value="ECO:0007669"/>
    <property type="project" value="InterPro"/>
</dbReference>
<dbReference type="GO" id="GO:0006777">
    <property type="term" value="P:Mo-molybdopterin cofactor biosynthetic process"/>
    <property type="evidence" value="ECO:0007669"/>
    <property type="project" value="UniProtKB-UniRule"/>
</dbReference>
<dbReference type="Gene3D" id="3.10.20.10">
    <property type="match status" value="1"/>
</dbReference>
<dbReference type="Gene3D" id="3.40.140.10">
    <property type="entry name" value="Cytidine Deaminase, domain 2"/>
    <property type="match status" value="1"/>
</dbReference>
<dbReference type="HAMAP" id="MF_00187">
    <property type="entry name" value="FdhD"/>
    <property type="match status" value="1"/>
</dbReference>
<dbReference type="InterPro" id="IPR016193">
    <property type="entry name" value="Cytidine_deaminase-like"/>
</dbReference>
<dbReference type="InterPro" id="IPR003786">
    <property type="entry name" value="FdhD"/>
</dbReference>
<dbReference type="NCBIfam" id="TIGR00129">
    <property type="entry name" value="fdhD_narQ"/>
    <property type="match status" value="1"/>
</dbReference>
<dbReference type="NCBIfam" id="NF001943">
    <property type="entry name" value="PRK00724.1-2"/>
    <property type="match status" value="1"/>
</dbReference>
<dbReference type="PANTHER" id="PTHR30592">
    <property type="entry name" value="FORMATE DEHYDROGENASE"/>
    <property type="match status" value="1"/>
</dbReference>
<dbReference type="PANTHER" id="PTHR30592:SF1">
    <property type="entry name" value="SULFUR CARRIER PROTEIN FDHD"/>
    <property type="match status" value="1"/>
</dbReference>
<dbReference type="Pfam" id="PF02634">
    <property type="entry name" value="FdhD-NarQ"/>
    <property type="match status" value="1"/>
</dbReference>
<dbReference type="PIRSF" id="PIRSF015626">
    <property type="entry name" value="FdhD"/>
    <property type="match status" value="1"/>
</dbReference>
<dbReference type="SUPFAM" id="SSF53927">
    <property type="entry name" value="Cytidine deaminase-like"/>
    <property type="match status" value="1"/>
</dbReference>
<sequence length="277" mass="29893">MGRITQHLQVPRVVSTETKVFVNTRPDTIAVEEPLEIRVNGTNLTTTMRTPGHDIELVHGLLLAEGLIRDASEVSTARYCAGAVGPDNQNTYNVLELDVVPANPRRELNLVSVQRNLPTSSACGVCGTTSIEQLMDKKGWPIEPITPDPRMIITLPEKLRERQKMFDKTGGVHAAGLATLDGELLVVREDVGRHNAADKVIGHMLMNGRLPLRDTILVMSSRASFELVQKAAMAGIPGVIAVGAATSLAVDTARDAGMFLAGFVRGNKFNHYAGELG</sequence>
<reference key="1">
    <citation type="journal article" date="2003" name="Genome Res.">
        <title>Comparative complete genome sequence analysis of the amino acid replacements responsible for the thermostability of Corynebacterium efficiens.</title>
        <authorList>
            <person name="Nishio Y."/>
            <person name="Nakamura Y."/>
            <person name="Kawarabayasi Y."/>
            <person name="Usuda Y."/>
            <person name="Kimura E."/>
            <person name="Sugimoto S."/>
            <person name="Matsui K."/>
            <person name="Yamagishi A."/>
            <person name="Kikuchi H."/>
            <person name="Ikeo K."/>
            <person name="Gojobori T."/>
        </authorList>
    </citation>
    <scope>NUCLEOTIDE SEQUENCE [LARGE SCALE GENOMIC DNA]</scope>
    <source>
        <strain>DSM 44549 / YS-314 / AJ 12310 / JCM 11189 / NBRC 100395</strain>
    </source>
</reference>
<feature type="chain" id="PRO_0000152898" description="Sulfur carrier protein FdhD">
    <location>
        <begin position="1"/>
        <end position="277"/>
    </location>
</feature>
<feature type="active site" description="Cysteine persulfide intermediate" evidence="1">
    <location>
        <position position="123"/>
    </location>
</feature>
<feature type="binding site" evidence="1">
    <location>
        <begin position="263"/>
        <end position="268"/>
    </location>
    <ligand>
        <name>Mo-bis(molybdopterin guanine dinucleotide)</name>
        <dbReference type="ChEBI" id="CHEBI:60539"/>
    </ligand>
</feature>
<organism>
    <name type="scientific">Corynebacterium efficiens (strain DSM 44549 / YS-314 / AJ 12310 / JCM 11189 / NBRC 100395)</name>
    <dbReference type="NCBI Taxonomy" id="196164"/>
    <lineage>
        <taxon>Bacteria</taxon>
        <taxon>Bacillati</taxon>
        <taxon>Actinomycetota</taxon>
        <taxon>Actinomycetes</taxon>
        <taxon>Mycobacteriales</taxon>
        <taxon>Corynebacteriaceae</taxon>
        <taxon>Corynebacterium</taxon>
    </lineage>
</organism>
<comment type="function">
    <text evidence="1">Required for formate dehydrogenase (FDH) activity. Acts as a sulfur carrier protein that transfers sulfur from IscS to the molybdenum cofactor prior to its insertion into FDH.</text>
</comment>
<comment type="subcellular location">
    <subcellularLocation>
        <location evidence="1">Cytoplasm</location>
    </subcellularLocation>
</comment>
<comment type="similarity">
    <text evidence="1">Belongs to the FdhD family.</text>
</comment>
<protein>
    <recommendedName>
        <fullName evidence="1">Sulfur carrier protein FdhD</fullName>
    </recommendedName>
</protein>
<accession>Q8FS66</accession>
<gene>
    <name evidence="1" type="primary">fdhD</name>
    <name type="ordered locus">CE0538</name>
</gene>